<comment type="function">
    <text evidence="1">Participates in the degradation of poly-3-hydroxybutyrate (PHB). It works downstream of poly(3-hydroxybutyrate) depolymerase, hydrolyzing D(-)-3-hydroxybutyrate oligomers of various length (3HB-oligomers) into 3HB-monomers.</text>
</comment>
<comment type="catalytic activity">
    <reaction evidence="1">
        <text>(3R)-hydroxybutanoate dimer + H2O = 2 (R)-3-hydroxybutanoate + H(+)</text>
        <dbReference type="Rhea" id="RHEA:10172"/>
        <dbReference type="ChEBI" id="CHEBI:10979"/>
        <dbReference type="ChEBI" id="CHEBI:10983"/>
        <dbReference type="ChEBI" id="CHEBI:15377"/>
        <dbReference type="ChEBI" id="CHEBI:15378"/>
        <dbReference type="EC" id="3.1.1.22"/>
    </reaction>
</comment>
<comment type="pathway">
    <text evidence="1">Lipid metabolism; butanoate metabolism.</text>
</comment>
<comment type="subcellular location">
    <subcellularLocation>
        <location evidence="1">Secreted</location>
    </subcellularLocation>
</comment>
<comment type="similarity">
    <text evidence="1">Belongs to the D-(-)-3-hydroxybutyrate oligomer hydrolase family.</text>
</comment>
<accession>Q63RF6</accession>
<sequence length="699" mass="71678">MTAIRGGSRRAPGLALALLGGVLLGACHGDENAQVNALPGFVSGSVRKTAYDGASDDLLTAGLGKTGLGSDTRPGFANPAQPSAAELRRLAIYSNYRALVDITPNGGYGRFWGPNVDLAGNDTLGEGKIAGTEYLAYSDDGSGRKNVTLLVQVPASFDPANPCIVTATASGSRGVYGAIAAAGEWGLKRGCAVAYNDKGGGNGAHEIGTGVVTLIDGTLATASSAGSSSLFTASESSSTLAAFNSAFPNRYAYKHAHSQQNPEQDWGRVTLQAVEFAYWALNEQFGPVVDGTRHGIRYRPGDITTIAASVSNGGGSALAAAEQDTRGWITAVVVGEPQINVRMTPGVTVEQGGAPVPSFGRPLADYATLANLLQPCAAAAVAATGAPYLSALPMGVTQSIRTQRCATLAAAGLVSGADTASQASDALAQLHAAGYLADSDLLQAPMWDSQAMPAIAVTYANAYTRSRVTDNLCNFSFATTNPVTGAVAAPAVSPMTNLFGAGNGVPPTNGINLVFNGASGGVDHRLATPDASFAGAFCLRQLWTANQLGIGTNVDAVRVAANLQHKPAIIVHGRSDALVPVNHASRAYVAQNSATEGRASQLSFYEVTNGQHFDAFLSVPGFDTRFVPVHYYDEQALNLMWNHLKSGAPLPPSQVIRTVPRGGVPGAAPALSTANLPPIVQSPGANAIAVNAGVIDVPL</sequence>
<gene>
    <name type="ordered locus">BPSL2716</name>
</gene>
<dbReference type="EC" id="3.1.1.22" evidence="1"/>
<dbReference type="EMBL" id="BX571965">
    <property type="protein sequence ID" value="CAH36724.1"/>
    <property type="molecule type" value="Genomic_DNA"/>
</dbReference>
<dbReference type="RefSeq" id="WP_004532230.1">
    <property type="nucleotide sequence ID" value="NZ_CP009538.1"/>
</dbReference>
<dbReference type="RefSeq" id="YP_109312.1">
    <property type="nucleotide sequence ID" value="NC_006350.1"/>
</dbReference>
<dbReference type="STRING" id="272560.BPSL2716"/>
<dbReference type="ESTHER" id="burps-hboh">
    <property type="family name" value="OHBut_olig_hydro_put"/>
</dbReference>
<dbReference type="KEGG" id="bps:BPSL2716"/>
<dbReference type="PATRIC" id="fig|272560.51.peg.2613"/>
<dbReference type="eggNOG" id="ENOG502Z8QU">
    <property type="taxonomic scope" value="Bacteria"/>
</dbReference>
<dbReference type="UniPathway" id="UPA00863"/>
<dbReference type="Proteomes" id="UP000000605">
    <property type="component" value="Chromosome 1"/>
</dbReference>
<dbReference type="GO" id="GO:0005615">
    <property type="term" value="C:extracellular space"/>
    <property type="evidence" value="ECO:0007669"/>
    <property type="project" value="InterPro"/>
</dbReference>
<dbReference type="GO" id="GO:0047989">
    <property type="term" value="F:hydroxybutyrate-dimer hydrolase activity"/>
    <property type="evidence" value="ECO:0007669"/>
    <property type="project" value="UniProtKB-UniRule"/>
</dbReference>
<dbReference type="GO" id="GO:0019605">
    <property type="term" value="P:butyrate metabolic process"/>
    <property type="evidence" value="ECO:0007669"/>
    <property type="project" value="UniProtKB-UniRule"/>
</dbReference>
<dbReference type="HAMAP" id="MF_01906">
    <property type="entry name" value="3HBOH"/>
    <property type="match status" value="1"/>
</dbReference>
<dbReference type="InterPro" id="IPR029058">
    <property type="entry name" value="AB_hydrolase_fold"/>
</dbReference>
<dbReference type="InterPro" id="IPR016582">
    <property type="entry name" value="OHBut_olig_hydro_put"/>
</dbReference>
<dbReference type="Pfam" id="PF10605">
    <property type="entry name" value="3HBOH"/>
    <property type="match status" value="1"/>
</dbReference>
<dbReference type="PIRSF" id="PIRSF011409">
    <property type="entry name" value="HObutyrate_olig_hydrol"/>
    <property type="match status" value="1"/>
</dbReference>
<dbReference type="SUPFAM" id="SSF53474">
    <property type="entry name" value="alpha/beta-Hydrolases"/>
    <property type="match status" value="1"/>
</dbReference>
<keyword id="KW-0378">Hydrolase</keyword>
<keyword id="KW-1185">Reference proteome</keyword>
<keyword id="KW-0964">Secreted</keyword>
<keyword id="KW-0732">Signal</keyword>
<name>HBOH_BURPS</name>
<proteinExistence type="inferred from homology"/>
<evidence type="ECO:0000255" key="1">
    <source>
        <dbReference type="HAMAP-Rule" id="MF_01906"/>
    </source>
</evidence>
<reference key="1">
    <citation type="journal article" date="2004" name="Proc. Natl. Acad. Sci. U.S.A.">
        <title>Genomic plasticity of the causative agent of melioidosis, Burkholderia pseudomallei.</title>
        <authorList>
            <person name="Holden M.T.G."/>
            <person name="Titball R.W."/>
            <person name="Peacock S.J."/>
            <person name="Cerdeno-Tarraga A.-M."/>
            <person name="Atkins T."/>
            <person name="Crossman L.C."/>
            <person name="Pitt T."/>
            <person name="Churcher C."/>
            <person name="Mungall K.L."/>
            <person name="Bentley S.D."/>
            <person name="Sebaihia M."/>
            <person name="Thomson N.R."/>
            <person name="Bason N."/>
            <person name="Beacham I.R."/>
            <person name="Brooks K."/>
            <person name="Brown K.A."/>
            <person name="Brown N.F."/>
            <person name="Challis G.L."/>
            <person name="Cherevach I."/>
            <person name="Chillingworth T."/>
            <person name="Cronin A."/>
            <person name="Crossett B."/>
            <person name="Davis P."/>
            <person name="DeShazer D."/>
            <person name="Feltwell T."/>
            <person name="Fraser A."/>
            <person name="Hance Z."/>
            <person name="Hauser H."/>
            <person name="Holroyd S."/>
            <person name="Jagels K."/>
            <person name="Keith K.E."/>
            <person name="Maddison M."/>
            <person name="Moule S."/>
            <person name="Price C."/>
            <person name="Quail M.A."/>
            <person name="Rabbinowitsch E."/>
            <person name="Rutherford K."/>
            <person name="Sanders M."/>
            <person name="Simmonds M."/>
            <person name="Songsivilai S."/>
            <person name="Stevens K."/>
            <person name="Tumapa S."/>
            <person name="Vesaratchavest M."/>
            <person name="Whitehead S."/>
            <person name="Yeats C."/>
            <person name="Barrell B.G."/>
            <person name="Oyston P.C.F."/>
            <person name="Parkhill J."/>
        </authorList>
    </citation>
    <scope>NUCLEOTIDE SEQUENCE [LARGE SCALE GENOMIC DNA]</scope>
    <source>
        <strain>K96243</strain>
    </source>
</reference>
<protein>
    <recommendedName>
        <fullName evidence="1">D-(-)-3-hydroxybutyrate oligomer hydrolase</fullName>
        <shortName evidence="1">3HB-oligomer hydrolase</shortName>
        <shortName evidence="1">3HBOH</shortName>
        <ecNumber evidence="1">3.1.1.22</ecNumber>
    </recommendedName>
</protein>
<organism>
    <name type="scientific">Burkholderia pseudomallei (strain K96243)</name>
    <dbReference type="NCBI Taxonomy" id="272560"/>
    <lineage>
        <taxon>Bacteria</taxon>
        <taxon>Pseudomonadati</taxon>
        <taxon>Pseudomonadota</taxon>
        <taxon>Betaproteobacteria</taxon>
        <taxon>Burkholderiales</taxon>
        <taxon>Burkholderiaceae</taxon>
        <taxon>Burkholderia</taxon>
        <taxon>pseudomallei group</taxon>
    </lineage>
</organism>
<feature type="signal peptide" evidence="1">
    <location>
        <begin position="1"/>
        <end position="33"/>
    </location>
</feature>
<feature type="chain" id="PRO_0000314421" description="D-(-)-3-hydroxybutyrate oligomer hydrolase">
    <location>
        <begin position="34"/>
        <end position="699"/>
    </location>
</feature>
<feature type="active site" description="Charge relay system" evidence="1">
    <location>
        <position position="311"/>
    </location>
</feature>